<organism>
    <name type="scientific">Vibrio vulnificus (strain CMCP6)</name>
    <dbReference type="NCBI Taxonomy" id="216895"/>
    <lineage>
        <taxon>Bacteria</taxon>
        <taxon>Pseudomonadati</taxon>
        <taxon>Pseudomonadota</taxon>
        <taxon>Gammaproteobacteria</taxon>
        <taxon>Vibrionales</taxon>
        <taxon>Vibrionaceae</taxon>
        <taxon>Vibrio</taxon>
    </lineage>
</organism>
<evidence type="ECO:0000255" key="1">
    <source>
        <dbReference type="HAMAP-Rule" id="MF_01838"/>
    </source>
</evidence>
<comment type="function">
    <text evidence="1">Involved in the final reduction of the elongation cycle of fatty acid synthesis (FAS II). Catalyzes the reduction of a carbon-carbon double bond in an enoyl moiety that is covalently linked to an acyl carrier protein (ACP).</text>
</comment>
<comment type="catalytic activity">
    <reaction evidence="1">
        <text>a 2,3-saturated acyl-[ACP] + NAD(+) = a (2E)-enoyl-[ACP] + NADH + H(+)</text>
        <dbReference type="Rhea" id="RHEA:10240"/>
        <dbReference type="Rhea" id="RHEA-COMP:9925"/>
        <dbReference type="Rhea" id="RHEA-COMP:9926"/>
        <dbReference type="ChEBI" id="CHEBI:15378"/>
        <dbReference type="ChEBI" id="CHEBI:57540"/>
        <dbReference type="ChEBI" id="CHEBI:57945"/>
        <dbReference type="ChEBI" id="CHEBI:78784"/>
        <dbReference type="ChEBI" id="CHEBI:78785"/>
        <dbReference type="EC" id="1.3.1.9"/>
    </reaction>
</comment>
<comment type="pathway">
    <text evidence="1">Lipid metabolism; fatty acid biosynthesis.</text>
</comment>
<comment type="subunit">
    <text evidence="1">Monomer.</text>
</comment>
<comment type="similarity">
    <text evidence="1">Belongs to the TER reductase family.</text>
</comment>
<keyword id="KW-0275">Fatty acid biosynthesis</keyword>
<keyword id="KW-0276">Fatty acid metabolism</keyword>
<keyword id="KW-0444">Lipid biosynthesis</keyword>
<keyword id="KW-0443">Lipid metabolism</keyword>
<keyword id="KW-0520">NAD</keyword>
<keyword id="KW-0560">Oxidoreductase</keyword>
<sequence length="400" mass="44252">MRIEPIIQGVVARSAHPFGCEAAIKKQIAFVKNAPQISQGPKRVLILGASSGFGLAARIALTFGGAQADTIGVSFERGPSEKGTGSAGWYNNVFFKREAEKEGRIAINIVGDAFASETRTQVIEAIETYFEGEVDLVIYSLATGMRPISNQPGEFWRSVIKPFGQTVTGASFDLEHDRWIDTTLESATEEEALHTIKVMGGEDWESWIDTLINAESIAQGCQTIAFSYVGPEITHPIYLDGTLGRAKIDLHQTSHSLNLKLANFDGAAYATVCKALVTKASVFIPALSPYLLALYRVMKDEKCHEGCIEQMQRLFATKLYGQDHISVDGERLVRMDDWELAPHIQNKVNQILEEMDANNFQVIGDYQGFKNEFLQLNGFGFDEVDYSQDIDLQTILKLTP</sequence>
<gene>
    <name evidence="1" type="primary">fabV2</name>
    <name type="ordered locus">VV2_0265</name>
</gene>
<reference key="1">
    <citation type="submission" date="2002-12" db="EMBL/GenBank/DDBJ databases">
        <title>Complete genome sequence of Vibrio vulnificus CMCP6.</title>
        <authorList>
            <person name="Rhee J.H."/>
            <person name="Kim S.Y."/>
            <person name="Chung S.S."/>
            <person name="Kim J.J."/>
            <person name="Moon Y.H."/>
            <person name="Jeong H."/>
            <person name="Choy H.E."/>
        </authorList>
    </citation>
    <scope>NUCLEOTIDE SEQUENCE [LARGE SCALE GENOMIC DNA]</scope>
    <source>
        <strain>CMCP6</strain>
    </source>
</reference>
<proteinExistence type="inferred from homology"/>
<feature type="chain" id="PRO_0000220055" description="Enoyl-[acyl-carrier-protein] reductase [NADH] 2">
    <location>
        <begin position="1"/>
        <end position="400"/>
    </location>
</feature>
<feature type="active site" description="Proton donor" evidence="1">
    <location>
        <position position="238"/>
    </location>
</feature>
<feature type="binding site" evidence="1">
    <location>
        <begin position="48"/>
        <end position="53"/>
    </location>
    <ligand>
        <name>NAD(+)</name>
        <dbReference type="ChEBI" id="CHEBI:57540"/>
    </ligand>
</feature>
<feature type="binding site" evidence="1">
    <location>
        <begin position="75"/>
        <end position="76"/>
    </location>
    <ligand>
        <name>NAD(+)</name>
        <dbReference type="ChEBI" id="CHEBI:57540"/>
    </ligand>
</feature>
<feature type="binding site" evidence="1">
    <location>
        <begin position="112"/>
        <end position="113"/>
    </location>
    <ligand>
        <name>NAD(+)</name>
        <dbReference type="ChEBI" id="CHEBI:57540"/>
    </ligand>
</feature>
<feature type="binding site" evidence="1">
    <location>
        <begin position="141"/>
        <end position="142"/>
    </location>
    <ligand>
        <name>NAD(+)</name>
        <dbReference type="ChEBI" id="CHEBI:57540"/>
    </ligand>
</feature>
<feature type="binding site" evidence="1">
    <location>
        <position position="228"/>
    </location>
    <ligand>
        <name>substrate</name>
    </ligand>
</feature>
<feature type="binding site" evidence="1">
    <location>
        <position position="247"/>
    </location>
    <ligand>
        <name>NAD(+)</name>
        <dbReference type="ChEBI" id="CHEBI:57540"/>
    </ligand>
</feature>
<feature type="binding site" evidence="1">
    <location>
        <begin position="276"/>
        <end position="278"/>
    </location>
    <ligand>
        <name>NAD(+)</name>
        <dbReference type="ChEBI" id="CHEBI:57540"/>
    </ligand>
</feature>
<feature type="site" description="Plays an important role in discriminating NADH against NADPH" evidence="1">
    <location>
        <position position="76"/>
    </location>
</feature>
<dbReference type="EC" id="1.3.1.9" evidence="1"/>
<dbReference type="EMBL" id="AE016796">
    <property type="protein sequence ID" value="AAO07231.1"/>
    <property type="molecule type" value="Genomic_DNA"/>
</dbReference>
<dbReference type="RefSeq" id="WP_011081235.1">
    <property type="nucleotide sequence ID" value="NC_004460.2"/>
</dbReference>
<dbReference type="SMR" id="Q8D795"/>
<dbReference type="KEGG" id="vvu:VV2_0265"/>
<dbReference type="HOGENOM" id="CLU_057698_1_0_6"/>
<dbReference type="UniPathway" id="UPA00094"/>
<dbReference type="Proteomes" id="UP000002275">
    <property type="component" value="Chromosome 2"/>
</dbReference>
<dbReference type="GO" id="GO:0004318">
    <property type="term" value="F:enoyl-[acyl-carrier-protein] reductase (NADH) activity"/>
    <property type="evidence" value="ECO:0007669"/>
    <property type="project" value="UniProtKB-UniRule"/>
</dbReference>
<dbReference type="GO" id="GO:0051287">
    <property type="term" value="F:NAD binding"/>
    <property type="evidence" value="ECO:0007669"/>
    <property type="project" value="UniProtKB-UniRule"/>
</dbReference>
<dbReference type="GO" id="GO:0050343">
    <property type="term" value="F:trans-2-enoyl-CoA reductase (NADH) activity"/>
    <property type="evidence" value="ECO:0007669"/>
    <property type="project" value="TreeGrafter"/>
</dbReference>
<dbReference type="GO" id="GO:0006633">
    <property type="term" value="P:fatty acid biosynthetic process"/>
    <property type="evidence" value="ECO:0007669"/>
    <property type="project" value="UniProtKB-UniRule"/>
</dbReference>
<dbReference type="Gene3D" id="3.40.50.720">
    <property type="entry name" value="NAD(P)-binding Rossmann-like Domain"/>
    <property type="match status" value="1"/>
</dbReference>
<dbReference type="HAMAP" id="MF_01838">
    <property type="entry name" value="FabV_reductase"/>
    <property type="match status" value="1"/>
</dbReference>
<dbReference type="InterPro" id="IPR024906">
    <property type="entry name" value="Eno_Rdtase_FAD-bd_dom"/>
</dbReference>
<dbReference type="InterPro" id="IPR024910">
    <property type="entry name" value="Enoyl-CoA_Rdtase_cat_dom"/>
</dbReference>
<dbReference type="InterPro" id="IPR050048">
    <property type="entry name" value="FabV-like_NADH_b"/>
</dbReference>
<dbReference type="InterPro" id="IPR036291">
    <property type="entry name" value="NAD(P)-bd_dom_sf"/>
</dbReference>
<dbReference type="InterPro" id="IPR010758">
    <property type="entry name" value="Trans-2-enoyl-CoA_reductase"/>
</dbReference>
<dbReference type="NCBIfam" id="NF043048">
    <property type="entry name" value="EnoyACPredFabV"/>
    <property type="match status" value="1"/>
</dbReference>
<dbReference type="NCBIfam" id="NF010177">
    <property type="entry name" value="PRK13656.1"/>
    <property type="match status" value="1"/>
</dbReference>
<dbReference type="PANTHER" id="PTHR37480">
    <property type="entry name" value="ENOYL-[ACYL-CARRIER-PROTEIN] REDUCTASE [NADH]"/>
    <property type="match status" value="1"/>
</dbReference>
<dbReference type="PANTHER" id="PTHR37480:SF1">
    <property type="entry name" value="ENOYL-[ACYL-CARRIER-PROTEIN] REDUCTASE [NADH]"/>
    <property type="match status" value="1"/>
</dbReference>
<dbReference type="Pfam" id="PF07055">
    <property type="entry name" value="Eno-Rase_FAD_bd"/>
    <property type="match status" value="1"/>
</dbReference>
<dbReference type="Pfam" id="PF12242">
    <property type="entry name" value="Eno-Rase_NADH_b"/>
    <property type="match status" value="1"/>
</dbReference>
<dbReference type="Pfam" id="PF12241">
    <property type="entry name" value="Enoyl_reductase"/>
    <property type="match status" value="1"/>
</dbReference>
<dbReference type="SUPFAM" id="SSF51735">
    <property type="entry name" value="NAD(P)-binding Rossmann-fold domains"/>
    <property type="match status" value="1"/>
</dbReference>
<accession>Q8D795</accession>
<name>FABV2_VIBVU</name>
<protein>
    <recommendedName>
        <fullName evidence="1">Enoyl-[acyl-carrier-protein] reductase [NADH] 2</fullName>
        <shortName evidence="1">ENR 2</shortName>
        <ecNumber evidence="1">1.3.1.9</ecNumber>
    </recommendedName>
</protein>